<organism>
    <name type="scientific">Salmonella typhi</name>
    <dbReference type="NCBI Taxonomy" id="90370"/>
    <lineage>
        <taxon>Bacteria</taxon>
        <taxon>Pseudomonadati</taxon>
        <taxon>Pseudomonadota</taxon>
        <taxon>Gammaproteobacteria</taxon>
        <taxon>Enterobacterales</taxon>
        <taxon>Enterobacteriaceae</taxon>
        <taxon>Salmonella</taxon>
    </lineage>
</organism>
<dbReference type="EC" id="5.4.2.7" evidence="1"/>
<dbReference type="EMBL" id="AL513382">
    <property type="protein sequence ID" value="CAD03404.1"/>
    <property type="molecule type" value="Genomic_DNA"/>
</dbReference>
<dbReference type="EMBL" id="AE014613">
    <property type="protein sequence ID" value="AAO72044.1"/>
    <property type="molecule type" value="Genomic_DNA"/>
</dbReference>
<dbReference type="RefSeq" id="NP_458981.1">
    <property type="nucleotide sequence ID" value="NC_003198.1"/>
</dbReference>
<dbReference type="RefSeq" id="WP_000816454.1">
    <property type="nucleotide sequence ID" value="NZ_WSUR01000014.1"/>
</dbReference>
<dbReference type="SMR" id="P63924"/>
<dbReference type="STRING" id="220341.gene:17588738"/>
<dbReference type="KEGG" id="stt:t4612"/>
<dbReference type="KEGG" id="sty:STY4920"/>
<dbReference type="PATRIC" id="fig|220341.7.peg.5041"/>
<dbReference type="eggNOG" id="COG1015">
    <property type="taxonomic scope" value="Bacteria"/>
</dbReference>
<dbReference type="HOGENOM" id="CLU_053861_0_0_6"/>
<dbReference type="OMA" id="SGHWEMM"/>
<dbReference type="OrthoDB" id="9769930at2"/>
<dbReference type="UniPathway" id="UPA00002">
    <property type="reaction ID" value="UER00467"/>
</dbReference>
<dbReference type="Proteomes" id="UP000000541">
    <property type="component" value="Chromosome"/>
</dbReference>
<dbReference type="Proteomes" id="UP000002670">
    <property type="component" value="Chromosome"/>
</dbReference>
<dbReference type="GO" id="GO:0005829">
    <property type="term" value="C:cytosol"/>
    <property type="evidence" value="ECO:0007669"/>
    <property type="project" value="TreeGrafter"/>
</dbReference>
<dbReference type="GO" id="GO:0000287">
    <property type="term" value="F:magnesium ion binding"/>
    <property type="evidence" value="ECO:0007669"/>
    <property type="project" value="InterPro"/>
</dbReference>
<dbReference type="GO" id="GO:0030145">
    <property type="term" value="F:manganese ion binding"/>
    <property type="evidence" value="ECO:0007669"/>
    <property type="project" value="UniProtKB-UniRule"/>
</dbReference>
<dbReference type="GO" id="GO:0008973">
    <property type="term" value="F:phosphopentomutase activity"/>
    <property type="evidence" value="ECO:0007669"/>
    <property type="project" value="UniProtKB-UniRule"/>
</dbReference>
<dbReference type="GO" id="GO:0006018">
    <property type="term" value="P:2-deoxyribose 1-phosphate catabolic process"/>
    <property type="evidence" value="ECO:0007669"/>
    <property type="project" value="UniProtKB-UniRule"/>
</dbReference>
<dbReference type="GO" id="GO:0006015">
    <property type="term" value="P:5-phosphoribose 1-diphosphate biosynthetic process"/>
    <property type="evidence" value="ECO:0007669"/>
    <property type="project" value="UniProtKB-UniPathway"/>
</dbReference>
<dbReference type="GO" id="GO:0043094">
    <property type="term" value="P:metabolic compound salvage"/>
    <property type="evidence" value="ECO:0007669"/>
    <property type="project" value="InterPro"/>
</dbReference>
<dbReference type="GO" id="GO:0009117">
    <property type="term" value="P:nucleotide metabolic process"/>
    <property type="evidence" value="ECO:0007669"/>
    <property type="project" value="InterPro"/>
</dbReference>
<dbReference type="CDD" id="cd16009">
    <property type="entry name" value="PPM"/>
    <property type="match status" value="1"/>
</dbReference>
<dbReference type="FunFam" id="3.30.70.1250:FF:000001">
    <property type="entry name" value="Phosphopentomutase"/>
    <property type="match status" value="1"/>
</dbReference>
<dbReference type="Gene3D" id="3.40.720.10">
    <property type="entry name" value="Alkaline Phosphatase, subunit A"/>
    <property type="match status" value="1"/>
</dbReference>
<dbReference type="Gene3D" id="3.30.70.1250">
    <property type="entry name" value="Phosphopentomutase"/>
    <property type="match status" value="1"/>
</dbReference>
<dbReference type="HAMAP" id="MF_00740">
    <property type="entry name" value="Phosphopentomut"/>
    <property type="match status" value="1"/>
</dbReference>
<dbReference type="InterPro" id="IPR017850">
    <property type="entry name" value="Alkaline_phosphatase_core_sf"/>
</dbReference>
<dbReference type="InterPro" id="IPR010045">
    <property type="entry name" value="DeoB"/>
</dbReference>
<dbReference type="InterPro" id="IPR006124">
    <property type="entry name" value="Metalloenzyme"/>
</dbReference>
<dbReference type="InterPro" id="IPR024052">
    <property type="entry name" value="Phosphopentomutase_DeoB_cap_sf"/>
</dbReference>
<dbReference type="NCBIfam" id="TIGR01696">
    <property type="entry name" value="deoB"/>
    <property type="match status" value="1"/>
</dbReference>
<dbReference type="NCBIfam" id="NF003766">
    <property type="entry name" value="PRK05362.1"/>
    <property type="match status" value="1"/>
</dbReference>
<dbReference type="PANTHER" id="PTHR21110">
    <property type="entry name" value="PHOSPHOPENTOMUTASE"/>
    <property type="match status" value="1"/>
</dbReference>
<dbReference type="PANTHER" id="PTHR21110:SF0">
    <property type="entry name" value="PHOSPHOPENTOMUTASE"/>
    <property type="match status" value="1"/>
</dbReference>
<dbReference type="Pfam" id="PF01676">
    <property type="entry name" value="Metalloenzyme"/>
    <property type="match status" value="1"/>
</dbReference>
<dbReference type="PIRSF" id="PIRSF001491">
    <property type="entry name" value="Ppentomutase"/>
    <property type="match status" value="1"/>
</dbReference>
<dbReference type="SUPFAM" id="SSF53649">
    <property type="entry name" value="Alkaline phosphatase-like"/>
    <property type="match status" value="1"/>
</dbReference>
<dbReference type="SUPFAM" id="SSF143856">
    <property type="entry name" value="DeoB insert domain-like"/>
    <property type="match status" value="1"/>
</dbReference>
<gene>
    <name evidence="1" type="primary">deoB</name>
    <name type="ordered locus">STY4920</name>
    <name type="ordered locus">t4612</name>
</gene>
<keyword id="KW-0963">Cytoplasm</keyword>
<keyword id="KW-0413">Isomerase</keyword>
<keyword id="KW-0464">Manganese</keyword>
<keyword id="KW-0479">Metal-binding</keyword>
<feature type="chain" id="PRO_0000199836" description="Phosphopentomutase">
    <location>
        <begin position="1"/>
        <end position="407"/>
    </location>
</feature>
<feature type="binding site" evidence="1">
    <location>
        <position position="10"/>
    </location>
    <ligand>
        <name>Mn(2+)</name>
        <dbReference type="ChEBI" id="CHEBI:29035"/>
        <label>1</label>
    </ligand>
</feature>
<feature type="binding site" evidence="1">
    <location>
        <position position="306"/>
    </location>
    <ligand>
        <name>Mn(2+)</name>
        <dbReference type="ChEBI" id="CHEBI:29035"/>
        <label>2</label>
    </ligand>
</feature>
<feature type="binding site" evidence="1">
    <location>
        <position position="311"/>
    </location>
    <ligand>
        <name>Mn(2+)</name>
        <dbReference type="ChEBI" id="CHEBI:29035"/>
        <label>2</label>
    </ligand>
</feature>
<feature type="binding site" evidence="1">
    <location>
        <position position="347"/>
    </location>
    <ligand>
        <name>Mn(2+)</name>
        <dbReference type="ChEBI" id="CHEBI:29035"/>
        <label>1</label>
    </ligand>
</feature>
<feature type="binding site" evidence="1">
    <location>
        <position position="348"/>
    </location>
    <ligand>
        <name>Mn(2+)</name>
        <dbReference type="ChEBI" id="CHEBI:29035"/>
        <label>1</label>
    </ligand>
</feature>
<feature type="binding site" evidence="1">
    <location>
        <position position="359"/>
    </location>
    <ligand>
        <name>Mn(2+)</name>
        <dbReference type="ChEBI" id="CHEBI:29035"/>
        <label>2</label>
    </ligand>
</feature>
<name>DEOB_SALTI</name>
<sequence length="407" mass="44244">MKRAFIMVLDSFGIGATEDADRFGDVGSDTLGHIAEACAKGEADNGRKGPLNLPNLTRLGLVKAHEGSTGKIAAGMDGNADVIGAYAWAHELSSGKDTPSGHWEIAGVPVLFDWGYFSDHENSFPQELLDKLVKRANLPGYLGNCHSSGTVILDQLGEEHMKTGKPIFYTSADSVFQIACHEETFGLDKLYELCEIAREELTEGGYNIGRVIARPFIGDKAGNFQRTGNRHDLAVEPPAPTVLQKLVDEKQGHVVSVGKIADIYANCGITKKVKATGLDALFDATLKEMKEAGDKTIVFTNFVDFDSSWGHRRDIAGYAAGLELFDRRLPELMELVGEDDILILTADHGCDPSWTGTDHTREHIPVLIYGPKVKPGSLGHRETFADIGQTLATYFGTSPMDYGKNML</sequence>
<reference key="1">
    <citation type="journal article" date="2001" name="Nature">
        <title>Complete genome sequence of a multiple drug resistant Salmonella enterica serovar Typhi CT18.</title>
        <authorList>
            <person name="Parkhill J."/>
            <person name="Dougan G."/>
            <person name="James K.D."/>
            <person name="Thomson N.R."/>
            <person name="Pickard D."/>
            <person name="Wain J."/>
            <person name="Churcher C.M."/>
            <person name="Mungall K.L."/>
            <person name="Bentley S.D."/>
            <person name="Holden M.T.G."/>
            <person name="Sebaihia M."/>
            <person name="Baker S."/>
            <person name="Basham D."/>
            <person name="Brooks K."/>
            <person name="Chillingworth T."/>
            <person name="Connerton P."/>
            <person name="Cronin A."/>
            <person name="Davis P."/>
            <person name="Davies R.M."/>
            <person name="Dowd L."/>
            <person name="White N."/>
            <person name="Farrar J."/>
            <person name="Feltwell T."/>
            <person name="Hamlin N."/>
            <person name="Haque A."/>
            <person name="Hien T.T."/>
            <person name="Holroyd S."/>
            <person name="Jagels K."/>
            <person name="Krogh A."/>
            <person name="Larsen T.S."/>
            <person name="Leather S."/>
            <person name="Moule S."/>
            <person name="O'Gaora P."/>
            <person name="Parry C."/>
            <person name="Quail M.A."/>
            <person name="Rutherford K.M."/>
            <person name="Simmonds M."/>
            <person name="Skelton J."/>
            <person name="Stevens K."/>
            <person name="Whitehead S."/>
            <person name="Barrell B.G."/>
        </authorList>
    </citation>
    <scope>NUCLEOTIDE SEQUENCE [LARGE SCALE GENOMIC DNA]</scope>
    <source>
        <strain>CT18</strain>
    </source>
</reference>
<reference key="2">
    <citation type="journal article" date="2003" name="J. Bacteriol.">
        <title>Comparative genomics of Salmonella enterica serovar Typhi strains Ty2 and CT18.</title>
        <authorList>
            <person name="Deng W."/>
            <person name="Liou S.-R."/>
            <person name="Plunkett G. III"/>
            <person name="Mayhew G.F."/>
            <person name="Rose D.J."/>
            <person name="Burland V."/>
            <person name="Kodoyianni V."/>
            <person name="Schwartz D.C."/>
            <person name="Blattner F.R."/>
        </authorList>
    </citation>
    <scope>NUCLEOTIDE SEQUENCE [LARGE SCALE GENOMIC DNA]</scope>
    <source>
        <strain>ATCC 700931 / Ty2</strain>
    </source>
</reference>
<accession>P63924</accession>
<accession>Q8XEK8</accession>
<evidence type="ECO:0000255" key="1">
    <source>
        <dbReference type="HAMAP-Rule" id="MF_00740"/>
    </source>
</evidence>
<protein>
    <recommendedName>
        <fullName evidence="1">Phosphopentomutase</fullName>
        <ecNumber evidence="1">5.4.2.7</ecNumber>
    </recommendedName>
    <alternativeName>
        <fullName evidence="1">Phosphodeoxyribomutase</fullName>
    </alternativeName>
</protein>
<comment type="function">
    <text evidence="1">Isomerase that catalyzes the conversion of deoxy-ribose 1-phosphate (dRib-1-P) and ribose 1-phosphate (Rib-1-P) to deoxy-ribose 5-phosphate (dRib-5-P) and ribose 5-phosphate (Rib-5-P), respectively.</text>
</comment>
<comment type="catalytic activity">
    <reaction evidence="1">
        <text>2-deoxy-alpha-D-ribose 1-phosphate = 2-deoxy-D-ribose 5-phosphate</text>
        <dbReference type="Rhea" id="RHEA:27658"/>
        <dbReference type="ChEBI" id="CHEBI:57259"/>
        <dbReference type="ChEBI" id="CHEBI:62877"/>
        <dbReference type="EC" id="5.4.2.7"/>
    </reaction>
</comment>
<comment type="catalytic activity">
    <reaction evidence="1">
        <text>alpha-D-ribose 1-phosphate = D-ribose 5-phosphate</text>
        <dbReference type="Rhea" id="RHEA:18793"/>
        <dbReference type="ChEBI" id="CHEBI:57720"/>
        <dbReference type="ChEBI" id="CHEBI:78346"/>
        <dbReference type="EC" id="5.4.2.7"/>
    </reaction>
</comment>
<comment type="cofactor">
    <cofactor evidence="1">
        <name>Mn(2+)</name>
        <dbReference type="ChEBI" id="CHEBI:29035"/>
    </cofactor>
    <text evidence="1">Binds 2 manganese ions.</text>
</comment>
<comment type="pathway">
    <text evidence="1">Carbohydrate degradation; 2-deoxy-D-ribose 1-phosphate degradation; D-glyceraldehyde 3-phosphate and acetaldehyde from 2-deoxy-alpha-D-ribose 1-phosphate: step 1/2.</text>
</comment>
<comment type="subcellular location">
    <subcellularLocation>
        <location evidence="1">Cytoplasm</location>
    </subcellularLocation>
</comment>
<comment type="similarity">
    <text evidence="1">Belongs to the phosphopentomutase family.</text>
</comment>
<proteinExistence type="inferred from homology"/>